<evidence type="ECO:0000250" key="1">
    <source>
        <dbReference type="UniProtKB" id="Q96BD8"/>
    </source>
</evidence>
<evidence type="ECO:0000250" key="2">
    <source>
        <dbReference type="UniProtKB" id="Q9CPV1"/>
    </source>
</evidence>
<evidence type="ECO:0000250" key="3">
    <source>
        <dbReference type="UniProtKB" id="Q9XWS0"/>
    </source>
</evidence>
<evidence type="ECO:0000256" key="4">
    <source>
        <dbReference type="SAM" id="MobiDB-lite"/>
    </source>
</evidence>
<evidence type="ECO:0000305" key="5"/>
<evidence type="ECO:0000312" key="6">
    <source>
        <dbReference type="WormBase" id="CBG02218"/>
    </source>
</evidence>
<name>SKA1_CAEBR</name>
<gene>
    <name evidence="6" type="primary">ska-1</name>
    <name evidence="6" type="ORF">CBG02218</name>
</gene>
<keyword id="KW-0131">Cell cycle</keyword>
<keyword id="KW-0132">Cell division</keyword>
<keyword id="KW-0137">Centromere</keyword>
<keyword id="KW-0158">Chromosome</keyword>
<keyword id="KW-0963">Cytoplasm</keyword>
<keyword id="KW-0206">Cytoskeleton</keyword>
<keyword id="KW-0995">Kinetochore</keyword>
<keyword id="KW-0493">Microtubule</keyword>
<keyword id="KW-0498">Mitosis</keyword>
<keyword id="KW-1185">Reference proteome</keyword>
<feature type="chain" id="PRO_0000373889" description="SKA complex subunit 1">
    <location>
        <begin position="1"/>
        <end position="239"/>
    </location>
</feature>
<feature type="region of interest" description="Disordered" evidence="4">
    <location>
        <begin position="87"/>
        <end position="115"/>
    </location>
</feature>
<feature type="region of interest" description="Microtubule binding" evidence="1">
    <location>
        <begin position="116"/>
        <end position="239"/>
    </location>
</feature>
<dbReference type="EMBL" id="HE601486">
    <property type="protein sequence ID" value="CAP23350.1"/>
    <property type="molecule type" value="Genomic_DNA"/>
</dbReference>
<dbReference type="SMR" id="A8WS92"/>
<dbReference type="FunCoup" id="A8WS92">
    <property type="interactions" value="649"/>
</dbReference>
<dbReference type="STRING" id="6238.A8WS92"/>
<dbReference type="EnsemblMetazoa" id="CBG02218.1">
    <property type="protein sequence ID" value="CBG02218.1"/>
    <property type="gene ID" value="WBGene00025304"/>
</dbReference>
<dbReference type="KEGG" id="cbr:CBG_02218"/>
<dbReference type="CTD" id="8581766"/>
<dbReference type="WormBase" id="CBG02218">
    <property type="protein sequence ID" value="CBP14380"/>
    <property type="gene ID" value="WBGene00025304"/>
    <property type="gene designation" value="Cbr-ska-1"/>
</dbReference>
<dbReference type="eggNOG" id="KOG4832">
    <property type="taxonomic scope" value="Eukaryota"/>
</dbReference>
<dbReference type="HOGENOM" id="CLU_1143437_0_0_1"/>
<dbReference type="InParanoid" id="A8WS92"/>
<dbReference type="OMA" id="NWRELEI"/>
<dbReference type="Proteomes" id="UP000008549">
    <property type="component" value="Unassembled WGS sequence"/>
</dbReference>
<dbReference type="GO" id="GO:0005737">
    <property type="term" value="C:cytoplasm"/>
    <property type="evidence" value="ECO:0007669"/>
    <property type="project" value="UniProtKB-KW"/>
</dbReference>
<dbReference type="GO" id="GO:0072687">
    <property type="term" value="C:meiotic spindle"/>
    <property type="evidence" value="ECO:0000250"/>
    <property type="project" value="UniProtKB"/>
</dbReference>
<dbReference type="GO" id="GO:0072686">
    <property type="term" value="C:mitotic spindle"/>
    <property type="evidence" value="ECO:0000318"/>
    <property type="project" value="GO_Central"/>
</dbReference>
<dbReference type="GO" id="GO:0000940">
    <property type="term" value="C:outer kinetochore"/>
    <property type="evidence" value="ECO:0000318"/>
    <property type="project" value="GO_Central"/>
</dbReference>
<dbReference type="GO" id="GO:0005876">
    <property type="term" value="C:spindle microtubule"/>
    <property type="evidence" value="ECO:0000318"/>
    <property type="project" value="GO_Central"/>
</dbReference>
<dbReference type="GO" id="GO:0008017">
    <property type="term" value="F:microtubule binding"/>
    <property type="evidence" value="ECO:0000250"/>
    <property type="project" value="UniProtKB"/>
</dbReference>
<dbReference type="GO" id="GO:0051315">
    <property type="term" value="P:attachment of mitotic spindle microtubules to kinetochore"/>
    <property type="evidence" value="ECO:0000250"/>
    <property type="project" value="UniProtKB"/>
</dbReference>
<dbReference type="GO" id="GO:0051301">
    <property type="term" value="P:cell division"/>
    <property type="evidence" value="ECO:0007669"/>
    <property type="project" value="UniProtKB-KW"/>
</dbReference>
<dbReference type="GO" id="GO:0007059">
    <property type="term" value="P:chromosome segregation"/>
    <property type="evidence" value="ECO:0000318"/>
    <property type="project" value="GO_Central"/>
</dbReference>
<dbReference type="GO" id="GO:0000278">
    <property type="term" value="P:mitotic cell cycle"/>
    <property type="evidence" value="ECO:0000318"/>
    <property type="project" value="GO_Central"/>
</dbReference>
<dbReference type="GO" id="GO:0007080">
    <property type="term" value="P:mitotic metaphase chromosome alignment"/>
    <property type="evidence" value="ECO:0000250"/>
    <property type="project" value="UniProtKB"/>
</dbReference>
<dbReference type="GO" id="GO:0031110">
    <property type="term" value="P:regulation of microtubule polymerization or depolymerization"/>
    <property type="evidence" value="ECO:0000318"/>
    <property type="project" value="GO_Central"/>
</dbReference>
<dbReference type="FunFam" id="1.10.10.1890:FF:000003">
    <property type="entry name" value="Spindle and kinetochore-associated protein 1 homolog"/>
    <property type="match status" value="1"/>
</dbReference>
<dbReference type="Gene3D" id="1.10.10.1890">
    <property type="entry name" value="Ska1 microtubule binding domain-like"/>
    <property type="match status" value="1"/>
</dbReference>
<dbReference type="InterPro" id="IPR009829">
    <property type="entry name" value="SKA1"/>
</dbReference>
<dbReference type="InterPro" id="IPR042031">
    <property type="entry name" value="SKA1_MBD_sf"/>
</dbReference>
<dbReference type="PANTHER" id="PTHR28573">
    <property type="entry name" value="SPINDLE AND KINETOCHORE-ASSOCIATED PROTEIN 1"/>
    <property type="match status" value="1"/>
</dbReference>
<dbReference type="PANTHER" id="PTHR28573:SF1">
    <property type="entry name" value="SPINDLE AND KINETOCHORE-ASSOCIATED PROTEIN 1"/>
    <property type="match status" value="1"/>
</dbReference>
<dbReference type="Pfam" id="PF07160">
    <property type="entry name" value="SKA1"/>
    <property type="match status" value="1"/>
</dbReference>
<organism>
    <name type="scientific">Caenorhabditis briggsae</name>
    <dbReference type="NCBI Taxonomy" id="6238"/>
    <lineage>
        <taxon>Eukaryota</taxon>
        <taxon>Metazoa</taxon>
        <taxon>Ecdysozoa</taxon>
        <taxon>Nematoda</taxon>
        <taxon>Chromadorea</taxon>
        <taxon>Rhabditida</taxon>
        <taxon>Rhabditina</taxon>
        <taxon>Rhabditomorpha</taxon>
        <taxon>Rhabditoidea</taxon>
        <taxon>Rhabditidae</taxon>
        <taxon>Peloderinae</taxon>
        <taxon>Caenorhabditis</taxon>
    </lineage>
</organism>
<proteinExistence type="inferred from homology"/>
<sequence length="239" mass="27543">MEAFMVSFERQKDAKFCMYRENIPNFESTLSSITKSTNSIKILLEDISNVQKVITDPCEQSCSSCSPNVLNKFLGIEEKLVNNVEIPDSVPQKSTRPCLDDEKEGSSVVQPPESGNRHVQLISEQEFKSIPKYQLGRLTLDNLNEIVGKMDEFLTKKNAILGKTNKQITRQDREVLDNWRELEIKAKGRLPTTLFFIENDIRPLLTERLRLSFAKAIPCLRHIRRVREERCGPLTFYYA</sequence>
<comment type="function">
    <text evidence="1 2 3">Component of the SKA complex, a microtubule plus end-binding complex of the outer kinetochore that stabilizes spindle microtubule-kinetochore attachments, promotes alignment of chromosomes at the mitotic spindle equator (chromosome congression) and assists suppression of the spindle assembly checkpoint. Kinetochores, consisting of a centromere-associated inner segment and a microtubule-contacting outer segment, play a crucial role in chromosome segregation by mediating the physical connection between centromeric DNA and spindle microtubules. The outer kinetochore is made up of the ten-subunit KMN network complex, comprising the MIS12, NDC80 and KNL1 complexes, and auxiliary microtubule-associated components such as the SKA complex; together they connect the outer kinetochore with the inner kinetochore, bind microtubules, and mediate interactions with mitotic checkpoint proteins that delay anaphase until chromosomes are bioriented on the spindle (By similarity). The SKA complex is loaded onto bioriented kinetochores and it facilitates chromosome congression by stabilizing microtubules and end-on attachment of the NDC80 complex to depolymerizing spindle microtubules, thereby assisting the poleward-moving kinetochore in withstanding microtubule pulling forces (By similarity). The complex associates with dynamic microtubule plus-ends and can track both depolymerizing and elongating microtubules (By similarity). The complex recruits protein phosphatase 1 (PP1) to the kinetochore in prometaphase and metaphase, to oppose spindle assembly checkpoint signaling and promote the onset of anaphase (By similarity). In the complex, it mediates interactions with microtubules (By similarity). During meiosis the SKA complex stabilizes the meiotic spindle and is required for its migration to the cortex (By similarity).</text>
</comment>
<comment type="subunit">
    <text evidence="3">Component of the SKA complex, composed of two copies of ska-1 and a single copy of ska-3. The core complex associates with microtubules and may form dimeric assemblies. Interacts with ska-3 and microtubules.</text>
</comment>
<comment type="subcellular location">
    <subcellularLocation>
        <location evidence="3">Cytoplasm</location>
        <location evidence="3">Cytoskeleton</location>
        <location evidence="3">Spindle</location>
    </subcellularLocation>
    <subcellularLocation>
        <location evidence="3">Chromosome</location>
        <location evidence="3">Centromere</location>
        <location evidence="3">Kinetochore</location>
    </subcellularLocation>
</comment>
<comment type="similarity">
    <text evidence="5">Belongs to the SKA1 family.</text>
</comment>
<protein>
    <recommendedName>
        <fullName evidence="5">SKA complex subunit 1</fullName>
    </recommendedName>
    <alternativeName>
        <fullName>Spindle and kinetochore-associated protein 1</fullName>
    </alternativeName>
</protein>
<accession>A8WS92</accession>
<reference key="1">
    <citation type="journal article" date="2003" name="PLoS Biol.">
        <title>The genome sequence of Caenorhabditis briggsae: a platform for comparative genomics.</title>
        <authorList>
            <person name="Stein L.D."/>
            <person name="Bao Z."/>
            <person name="Blasiar D."/>
            <person name="Blumenthal T."/>
            <person name="Brent M.R."/>
            <person name="Chen N."/>
            <person name="Chinwalla A."/>
            <person name="Clarke L."/>
            <person name="Clee C."/>
            <person name="Coghlan A."/>
            <person name="Coulson A."/>
            <person name="D'Eustachio P."/>
            <person name="Fitch D.H.A."/>
            <person name="Fulton L.A."/>
            <person name="Fulton R.E."/>
            <person name="Griffiths-Jones S."/>
            <person name="Harris T.W."/>
            <person name="Hillier L.W."/>
            <person name="Kamath R."/>
            <person name="Kuwabara P.E."/>
            <person name="Mardis E.R."/>
            <person name="Marra M.A."/>
            <person name="Miner T.L."/>
            <person name="Minx P."/>
            <person name="Mullikin J.C."/>
            <person name="Plumb R.W."/>
            <person name="Rogers J."/>
            <person name="Schein J.E."/>
            <person name="Sohrmann M."/>
            <person name="Spieth J."/>
            <person name="Stajich J.E."/>
            <person name="Wei C."/>
            <person name="Willey D."/>
            <person name="Wilson R.K."/>
            <person name="Durbin R.M."/>
            <person name="Waterston R.H."/>
        </authorList>
    </citation>
    <scope>NUCLEOTIDE SEQUENCE [LARGE SCALE GENOMIC DNA]</scope>
    <source>
        <strain>AF16</strain>
    </source>
</reference>